<accession>Q8VCD5</accession>
<accession>Q8BYS6</accession>
<accession>Q99KQ1</accession>
<organism>
    <name type="scientific">Mus musculus</name>
    <name type="common">Mouse</name>
    <dbReference type="NCBI Taxonomy" id="10090"/>
    <lineage>
        <taxon>Eukaryota</taxon>
        <taxon>Metazoa</taxon>
        <taxon>Chordata</taxon>
        <taxon>Craniata</taxon>
        <taxon>Vertebrata</taxon>
        <taxon>Euteleostomi</taxon>
        <taxon>Mammalia</taxon>
        <taxon>Eutheria</taxon>
        <taxon>Euarchontoglires</taxon>
        <taxon>Glires</taxon>
        <taxon>Rodentia</taxon>
        <taxon>Myomorpha</taxon>
        <taxon>Muroidea</taxon>
        <taxon>Muridae</taxon>
        <taxon>Murinae</taxon>
        <taxon>Mus</taxon>
        <taxon>Mus</taxon>
    </lineage>
</organism>
<dbReference type="EMBL" id="AK033151">
    <property type="protein sequence ID" value="BAC28172.1"/>
    <property type="molecule type" value="mRNA"/>
</dbReference>
<dbReference type="EMBL" id="AK038451">
    <property type="protein sequence ID" value="BAC30005.1"/>
    <property type="molecule type" value="mRNA"/>
</dbReference>
<dbReference type="EMBL" id="AK049112">
    <property type="protein sequence ID" value="BAC33548.1"/>
    <property type="molecule type" value="mRNA"/>
</dbReference>
<dbReference type="EMBL" id="AK151377">
    <property type="protein sequence ID" value="BAE30349.1"/>
    <property type="molecule type" value="mRNA"/>
</dbReference>
<dbReference type="EMBL" id="BC004062">
    <property type="protein sequence ID" value="AAH04062.1"/>
    <property type="molecule type" value="mRNA"/>
</dbReference>
<dbReference type="EMBL" id="BC020185">
    <property type="protein sequence ID" value="AAH20185.1"/>
    <property type="molecule type" value="mRNA"/>
</dbReference>
<dbReference type="CCDS" id="CCDS22834.1"/>
<dbReference type="RefSeq" id="NP_659182.1">
    <property type="nucleotide sequence ID" value="NM_144933.2"/>
</dbReference>
<dbReference type="PDB" id="6W1S">
    <property type="method" value="EM"/>
    <property type="resolution" value="4.02 A"/>
    <property type="chains" value="L=15-645"/>
</dbReference>
<dbReference type="PDB" id="8T1I">
    <property type="method" value="EM"/>
    <property type="resolution" value="4.68 A"/>
    <property type="chains" value="L=1-649"/>
</dbReference>
<dbReference type="PDB" id="8T1L">
    <property type="method" value="EM"/>
    <property type="resolution" value="4.83 A"/>
    <property type="chains" value="L=1-649"/>
</dbReference>
<dbReference type="PDBsum" id="6W1S"/>
<dbReference type="PDBsum" id="8T1I"/>
<dbReference type="PDBsum" id="8T1L"/>
<dbReference type="EMDB" id="EMD-21514"/>
<dbReference type="EMDB" id="EMD-40968"/>
<dbReference type="EMDB" id="EMD-40971"/>
<dbReference type="SMR" id="Q8VCD5"/>
<dbReference type="BioGRID" id="231602">
    <property type="interactions" value="5"/>
</dbReference>
<dbReference type="ComplexPortal" id="CPX-3264">
    <property type="entry name" value="Core mediator complex"/>
</dbReference>
<dbReference type="CORUM" id="Q8VCD5"/>
<dbReference type="DIP" id="DIP-48407N"/>
<dbReference type="FunCoup" id="Q8VCD5">
    <property type="interactions" value="4141"/>
</dbReference>
<dbReference type="IntAct" id="Q8VCD5">
    <property type="interactions" value="11"/>
</dbReference>
<dbReference type="MINT" id="Q8VCD5"/>
<dbReference type="STRING" id="10090.ENSMUSP00000034411"/>
<dbReference type="iPTMnet" id="Q8VCD5"/>
<dbReference type="PhosphoSitePlus" id="Q8VCD5"/>
<dbReference type="SwissPalm" id="Q8VCD5"/>
<dbReference type="PaxDb" id="10090-ENSMUSP00000034411"/>
<dbReference type="PeptideAtlas" id="Q8VCD5"/>
<dbReference type="ProteomicsDB" id="295988"/>
<dbReference type="Pumba" id="Q8VCD5"/>
<dbReference type="DNASU" id="234959"/>
<dbReference type="Ensembl" id="ENSMUST00000034411.10">
    <property type="protein sequence ID" value="ENSMUSP00000034411.9"/>
    <property type="gene ID" value="ENSMUSG00000031935.10"/>
</dbReference>
<dbReference type="GeneID" id="234959"/>
<dbReference type="KEGG" id="mmu:234959"/>
<dbReference type="UCSC" id="uc009ofl.1">
    <property type="organism name" value="mouse"/>
</dbReference>
<dbReference type="AGR" id="MGI:2182585"/>
<dbReference type="CTD" id="9440"/>
<dbReference type="MGI" id="MGI:2182585">
    <property type="gene designation" value="Med17"/>
</dbReference>
<dbReference type="VEuPathDB" id="HostDB:ENSMUSG00000031935"/>
<dbReference type="eggNOG" id="KOG4512">
    <property type="taxonomic scope" value="Eukaryota"/>
</dbReference>
<dbReference type="GeneTree" id="ENSGT00390000011810"/>
<dbReference type="HOGENOM" id="CLU_028003_1_0_1"/>
<dbReference type="InParanoid" id="Q8VCD5"/>
<dbReference type="OMA" id="HMSYEPQ"/>
<dbReference type="OrthoDB" id="10058398at2759"/>
<dbReference type="PhylomeDB" id="Q8VCD5"/>
<dbReference type="TreeFam" id="TF323615"/>
<dbReference type="BioGRID-ORCS" id="234959">
    <property type="hits" value="24 hits in 81 CRISPR screens"/>
</dbReference>
<dbReference type="ChiTaRS" id="Med17">
    <property type="organism name" value="mouse"/>
</dbReference>
<dbReference type="PRO" id="PR:Q8VCD5"/>
<dbReference type="Proteomes" id="UP000000589">
    <property type="component" value="Chromosome 9"/>
</dbReference>
<dbReference type="RNAct" id="Q8VCD5">
    <property type="molecule type" value="protein"/>
</dbReference>
<dbReference type="Bgee" id="ENSMUSG00000031935">
    <property type="expression patterns" value="Expressed in primary oocyte and 247 other cell types or tissues"/>
</dbReference>
<dbReference type="ExpressionAtlas" id="Q8VCD5">
    <property type="expression patterns" value="baseline and differential"/>
</dbReference>
<dbReference type="GO" id="GO:0070847">
    <property type="term" value="C:core mediator complex"/>
    <property type="evidence" value="ECO:0000266"/>
    <property type="project" value="ComplexPortal"/>
</dbReference>
<dbReference type="GO" id="GO:0016592">
    <property type="term" value="C:mediator complex"/>
    <property type="evidence" value="ECO:0000314"/>
    <property type="project" value="MGI"/>
</dbReference>
<dbReference type="GO" id="GO:0005654">
    <property type="term" value="C:nucleoplasm"/>
    <property type="evidence" value="ECO:0000304"/>
    <property type="project" value="Reactome"/>
</dbReference>
<dbReference type="GO" id="GO:0005634">
    <property type="term" value="C:nucleus"/>
    <property type="evidence" value="ECO:0000266"/>
    <property type="project" value="ComplexPortal"/>
</dbReference>
<dbReference type="GO" id="GO:0005667">
    <property type="term" value="C:transcription regulator complex"/>
    <property type="evidence" value="ECO:0000266"/>
    <property type="project" value="MGI"/>
</dbReference>
<dbReference type="GO" id="GO:0000151">
    <property type="term" value="C:ubiquitin ligase complex"/>
    <property type="evidence" value="ECO:0007669"/>
    <property type="project" value="Ensembl"/>
</dbReference>
<dbReference type="GO" id="GO:0046966">
    <property type="term" value="F:nuclear thyroid hormone receptor binding"/>
    <property type="evidence" value="ECO:0007669"/>
    <property type="project" value="Ensembl"/>
</dbReference>
<dbReference type="GO" id="GO:0003713">
    <property type="term" value="F:transcription coactivator activity"/>
    <property type="evidence" value="ECO:0000266"/>
    <property type="project" value="MGI"/>
</dbReference>
<dbReference type="GO" id="GO:0061630">
    <property type="term" value="F:ubiquitin protein ligase activity"/>
    <property type="evidence" value="ECO:0007669"/>
    <property type="project" value="Ensembl"/>
</dbReference>
<dbReference type="GO" id="GO:0045944">
    <property type="term" value="P:positive regulation of transcription by RNA polymerase II"/>
    <property type="evidence" value="ECO:0000266"/>
    <property type="project" value="MGI"/>
</dbReference>
<dbReference type="GO" id="GO:0032968">
    <property type="term" value="P:positive regulation of transcription elongation by RNA polymerase II"/>
    <property type="evidence" value="ECO:0000303"/>
    <property type="project" value="ComplexPortal"/>
</dbReference>
<dbReference type="GO" id="GO:0060261">
    <property type="term" value="P:positive regulation of transcription initiation by RNA polymerase II"/>
    <property type="evidence" value="ECO:0000303"/>
    <property type="project" value="ComplexPortal"/>
</dbReference>
<dbReference type="GO" id="GO:0016567">
    <property type="term" value="P:protein ubiquitination"/>
    <property type="evidence" value="ECO:0007669"/>
    <property type="project" value="Ensembl"/>
</dbReference>
<dbReference type="GO" id="GO:0006357">
    <property type="term" value="P:regulation of transcription by RNA polymerase II"/>
    <property type="evidence" value="ECO:0000266"/>
    <property type="project" value="MGI"/>
</dbReference>
<dbReference type="GO" id="GO:0051123">
    <property type="term" value="P:RNA polymerase II preinitiation complex assembly"/>
    <property type="evidence" value="ECO:0000303"/>
    <property type="project" value="ComplexPortal"/>
</dbReference>
<dbReference type="GO" id="GO:0035019">
    <property type="term" value="P:somatic stem cell population maintenance"/>
    <property type="evidence" value="ECO:0000315"/>
    <property type="project" value="MGI"/>
</dbReference>
<dbReference type="InterPro" id="IPR019313">
    <property type="entry name" value="Mediator_Med17"/>
</dbReference>
<dbReference type="PANTHER" id="PTHR13114">
    <property type="entry name" value="MEDIATOR OF RNA POLYMERASE II TRANSCRIPTION SUBUNIT 17"/>
    <property type="match status" value="1"/>
</dbReference>
<dbReference type="PANTHER" id="PTHR13114:SF7">
    <property type="entry name" value="MEDIATOR OF RNA POLYMERASE II TRANSCRIPTION SUBUNIT 17"/>
    <property type="match status" value="1"/>
</dbReference>
<dbReference type="Pfam" id="PF10156">
    <property type="entry name" value="Med17"/>
    <property type="match status" value="1"/>
</dbReference>
<evidence type="ECO:0000250" key="1"/>
<evidence type="ECO:0000256" key="2">
    <source>
        <dbReference type="SAM" id="MobiDB-lite"/>
    </source>
</evidence>
<evidence type="ECO:0000269" key="3">
    <source>
    </source>
</evidence>
<evidence type="ECO:0000269" key="4">
    <source>
    </source>
</evidence>
<evidence type="ECO:0000305" key="5"/>
<name>MED17_MOUSE</name>
<sequence>MSGVRAVRISIESACEKQVQEVGLDGTETYLQPLSMSQNLARLAQRIDFSQGSGSEEEEAAGPDGDAPDWGGAGADQDDEEGLVKFQPSLWPWDSVRNNLRSALTEMCVLYDVLSIVRDKKFMTLDPVSQDALPPKQSPQTLQLISKKKSLAGAAQILLKGAERLTKSVAENQENKLQRDFNSELLRLRQHWKLRKVGDKILGDLSYRSAGSLFPHHGTFEVIKNTDIDLDKKIPEDYCPLDVQIPSDLEGSAYIKVSIQKQAPDIGDLGTVNLFKRPLPKSKPGSPHWQTKLEAAQNVLLCKEIFAQLSREAVQIKSQIPHIVVKNQIISQPFPSLQLSISLCHSSDDKKSQKCAAEKPGQEDHLYVLEHNLHLLIREFHKQTLSSIVMPHPASAPFGHKRMRLSGPQAFDKNEINSIQSTEGLLEKIIKQAKHIFLRSRTAATIDSLASRIEDPQIQAHWSNINDVYESSVKVLITSQGYEQICKSIQLQLNIGVEQVRVVHRDGRVIMLSHQEQELQDFLLSQMSQHQVHAVQQLAKVMGWQVLSFSNHVGLGPIESIGNASAITVASPSGDYAISVRNGPESGSKIMVQFPRNQCKDLPKSDVLQDSKWSHLRGPFKEVQWNKMEGRNFVYKMELLMSALSPCLL</sequence>
<proteinExistence type="evidence at protein level"/>
<protein>
    <recommendedName>
        <fullName>Mediator of RNA polymerase II transcription subunit 17</fullName>
    </recommendedName>
    <alternativeName>
        <fullName>Cofactor required for Sp1 transcriptional activation subunit 6</fullName>
        <shortName>CRSP complex subunit 6</shortName>
    </alternativeName>
    <alternativeName>
        <fullName>Mediator complex subunit 17</fullName>
    </alternativeName>
    <alternativeName>
        <fullName>Thyroid hormone receptor-associated protein complex 80 kDa component</fullName>
    </alternativeName>
</protein>
<reference key="1">
    <citation type="journal article" date="2005" name="Science">
        <title>The transcriptional landscape of the mammalian genome.</title>
        <authorList>
            <person name="Carninci P."/>
            <person name="Kasukawa T."/>
            <person name="Katayama S."/>
            <person name="Gough J."/>
            <person name="Frith M.C."/>
            <person name="Maeda N."/>
            <person name="Oyama R."/>
            <person name="Ravasi T."/>
            <person name="Lenhard B."/>
            <person name="Wells C."/>
            <person name="Kodzius R."/>
            <person name="Shimokawa K."/>
            <person name="Bajic V.B."/>
            <person name="Brenner S.E."/>
            <person name="Batalov S."/>
            <person name="Forrest A.R."/>
            <person name="Zavolan M."/>
            <person name="Davis M.J."/>
            <person name="Wilming L.G."/>
            <person name="Aidinis V."/>
            <person name="Allen J.E."/>
            <person name="Ambesi-Impiombato A."/>
            <person name="Apweiler R."/>
            <person name="Aturaliya R.N."/>
            <person name="Bailey T.L."/>
            <person name="Bansal M."/>
            <person name="Baxter L."/>
            <person name="Beisel K.W."/>
            <person name="Bersano T."/>
            <person name="Bono H."/>
            <person name="Chalk A.M."/>
            <person name="Chiu K.P."/>
            <person name="Choudhary V."/>
            <person name="Christoffels A."/>
            <person name="Clutterbuck D.R."/>
            <person name="Crowe M.L."/>
            <person name="Dalla E."/>
            <person name="Dalrymple B.P."/>
            <person name="de Bono B."/>
            <person name="Della Gatta G."/>
            <person name="di Bernardo D."/>
            <person name="Down T."/>
            <person name="Engstrom P."/>
            <person name="Fagiolini M."/>
            <person name="Faulkner G."/>
            <person name="Fletcher C.F."/>
            <person name="Fukushima T."/>
            <person name="Furuno M."/>
            <person name="Futaki S."/>
            <person name="Gariboldi M."/>
            <person name="Georgii-Hemming P."/>
            <person name="Gingeras T.R."/>
            <person name="Gojobori T."/>
            <person name="Green R.E."/>
            <person name="Gustincich S."/>
            <person name="Harbers M."/>
            <person name="Hayashi Y."/>
            <person name="Hensch T.K."/>
            <person name="Hirokawa N."/>
            <person name="Hill D."/>
            <person name="Huminiecki L."/>
            <person name="Iacono M."/>
            <person name="Ikeo K."/>
            <person name="Iwama A."/>
            <person name="Ishikawa T."/>
            <person name="Jakt M."/>
            <person name="Kanapin A."/>
            <person name="Katoh M."/>
            <person name="Kawasawa Y."/>
            <person name="Kelso J."/>
            <person name="Kitamura H."/>
            <person name="Kitano H."/>
            <person name="Kollias G."/>
            <person name="Krishnan S.P."/>
            <person name="Kruger A."/>
            <person name="Kummerfeld S.K."/>
            <person name="Kurochkin I.V."/>
            <person name="Lareau L.F."/>
            <person name="Lazarevic D."/>
            <person name="Lipovich L."/>
            <person name="Liu J."/>
            <person name="Liuni S."/>
            <person name="McWilliam S."/>
            <person name="Madan Babu M."/>
            <person name="Madera M."/>
            <person name="Marchionni L."/>
            <person name="Matsuda H."/>
            <person name="Matsuzawa S."/>
            <person name="Miki H."/>
            <person name="Mignone F."/>
            <person name="Miyake S."/>
            <person name="Morris K."/>
            <person name="Mottagui-Tabar S."/>
            <person name="Mulder N."/>
            <person name="Nakano N."/>
            <person name="Nakauchi H."/>
            <person name="Ng P."/>
            <person name="Nilsson R."/>
            <person name="Nishiguchi S."/>
            <person name="Nishikawa S."/>
            <person name="Nori F."/>
            <person name="Ohara O."/>
            <person name="Okazaki Y."/>
            <person name="Orlando V."/>
            <person name="Pang K.C."/>
            <person name="Pavan W.J."/>
            <person name="Pavesi G."/>
            <person name="Pesole G."/>
            <person name="Petrovsky N."/>
            <person name="Piazza S."/>
            <person name="Reed J."/>
            <person name="Reid J.F."/>
            <person name="Ring B.Z."/>
            <person name="Ringwald M."/>
            <person name="Rost B."/>
            <person name="Ruan Y."/>
            <person name="Salzberg S.L."/>
            <person name="Sandelin A."/>
            <person name="Schneider C."/>
            <person name="Schoenbach C."/>
            <person name="Sekiguchi K."/>
            <person name="Semple C.A."/>
            <person name="Seno S."/>
            <person name="Sessa L."/>
            <person name="Sheng Y."/>
            <person name="Shibata Y."/>
            <person name="Shimada H."/>
            <person name="Shimada K."/>
            <person name="Silva D."/>
            <person name="Sinclair B."/>
            <person name="Sperling S."/>
            <person name="Stupka E."/>
            <person name="Sugiura K."/>
            <person name="Sultana R."/>
            <person name="Takenaka Y."/>
            <person name="Taki K."/>
            <person name="Tammoja K."/>
            <person name="Tan S.L."/>
            <person name="Tang S."/>
            <person name="Taylor M.S."/>
            <person name="Tegner J."/>
            <person name="Teichmann S.A."/>
            <person name="Ueda H.R."/>
            <person name="van Nimwegen E."/>
            <person name="Verardo R."/>
            <person name="Wei C.L."/>
            <person name="Yagi K."/>
            <person name="Yamanishi H."/>
            <person name="Zabarovsky E."/>
            <person name="Zhu S."/>
            <person name="Zimmer A."/>
            <person name="Hide W."/>
            <person name="Bult C."/>
            <person name="Grimmond S.M."/>
            <person name="Teasdale R.D."/>
            <person name="Liu E.T."/>
            <person name="Brusic V."/>
            <person name="Quackenbush J."/>
            <person name="Wahlestedt C."/>
            <person name="Mattick J.S."/>
            <person name="Hume D.A."/>
            <person name="Kai C."/>
            <person name="Sasaki D."/>
            <person name="Tomaru Y."/>
            <person name="Fukuda S."/>
            <person name="Kanamori-Katayama M."/>
            <person name="Suzuki M."/>
            <person name="Aoki J."/>
            <person name="Arakawa T."/>
            <person name="Iida J."/>
            <person name="Imamura K."/>
            <person name="Itoh M."/>
            <person name="Kato T."/>
            <person name="Kawaji H."/>
            <person name="Kawagashira N."/>
            <person name="Kawashima T."/>
            <person name="Kojima M."/>
            <person name="Kondo S."/>
            <person name="Konno H."/>
            <person name="Nakano K."/>
            <person name="Ninomiya N."/>
            <person name="Nishio T."/>
            <person name="Okada M."/>
            <person name="Plessy C."/>
            <person name="Shibata K."/>
            <person name="Shiraki T."/>
            <person name="Suzuki S."/>
            <person name="Tagami M."/>
            <person name="Waki K."/>
            <person name="Watahiki A."/>
            <person name="Okamura-Oho Y."/>
            <person name="Suzuki H."/>
            <person name="Kawai J."/>
            <person name="Hayashizaki Y."/>
        </authorList>
    </citation>
    <scope>NUCLEOTIDE SEQUENCE [LARGE SCALE MRNA]</scope>
    <source>
        <strain>C57BL/6J</strain>
        <tissue>Bone marrow</tissue>
        <tissue>Hypothalamus</tissue>
        <tissue>Testis</tissue>
    </source>
</reference>
<reference key="2">
    <citation type="journal article" date="2004" name="Genome Res.">
        <title>The status, quality, and expansion of the NIH full-length cDNA project: the Mammalian Gene Collection (MGC).</title>
        <authorList>
            <consortium name="The MGC Project Team"/>
        </authorList>
    </citation>
    <scope>NUCLEOTIDE SEQUENCE [LARGE SCALE MRNA]</scope>
    <source>
        <strain>Czech II</strain>
        <tissue>Eye</tissue>
        <tissue>Mammary tumor</tissue>
    </source>
</reference>
<reference key="3">
    <citation type="journal article" date="2002" name="Nature">
        <title>Transcription coactivator TRAP220 is required for PPAR gamma 2-stimulated adipogenesis.</title>
        <authorList>
            <person name="Ge K."/>
            <person name="Guermah M."/>
            <person name="Yuan C.-X."/>
            <person name="Ito M."/>
            <person name="Wallberg A.E."/>
            <person name="Spiegelman B.M."/>
            <person name="Roeder R.G."/>
        </authorList>
    </citation>
    <scope>INTERACTION WITH PPARG</scope>
</reference>
<reference key="4">
    <citation type="journal article" date="2006" name="Proc. Natl. Acad. Sci. U.S.A.">
        <title>The mediator complex functions as a coactivator for GATA-1 in erythropoiesis via subunit Med1/TRAP220.</title>
        <authorList>
            <person name="Stumpf M."/>
            <person name="Waskow C."/>
            <person name="Kroetschel M."/>
            <person name="van Essen D."/>
            <person name="Rodriguez P."/>
            <person name="Zhang X."/>
            <person name="Guyot B."/>
            <person name="Roeder R.G."/>
            <person name="Borggrefe T."/>
        </authorList>
    </citation>
    <scope>INTERACTION WITH GATA1</scope>
    <scope>ASSOCIATION WITH PROMOTER REGIONS</scope>
</reference>
<reference key="5">
    <citation type="journal article" date="2007" name="Proc. Natl. Acad. Sci. U.S.A.">
        <authorList>
            <person name="Stumpf M."/>
            <person name="Waskow C."/>
            <person name="Kroetschel M."/>
            <person name="van Essen D."/>
            <person name="Rodriguez P."/>
            <person name="Zhang X."/>
            <person name="Guyot B."/>
            <person name="Roeder R.G."/>
            <person name="Borggrefe T."/>
        </authorList>
    </citation>
    <scope>ERRATUM OF PUBMED:17132730</scope>
</reference>
<reference key="6">
    <citation type="journal article" date="2010" name="Cell">
        <title>A tissue-specific atlas of mouse protein phosphorylation and expression.</title>
        <authorList>
            <person name="Huttlin E.L."/>
            <person name="Jedrychowski M.P."/>
            <person name="Elias J.E."/>
            <person name="Goswami T."/>
            <person name="Rad R."/>
            <person name="Beausoleil S.A."/>
            <person name="Villen J."/>
            <person name="Haas W."/>
            <person name="Sowa M.E."/>
            <person name="Gygi S.P."/>
        </authorList>
    </citation>
    <scope>IDENTIFICATION BY MASS SPECTROMETRY [LARGE SCALE ANALYSIS]</scope>
    <source>
        <tissue>Brain</tissue>
        <tissue>Spleen</tissue>
        <tissue>Testis</tissue>
    </source>
</reference>
<gene>
    <name type="primary">Med17</name>
    <name type="synonym">Crsp6</name>
    <name type="synonym">Trap80</name>
</gene>
<keyword id="KW-0002">3D-structure</keyword>
<keyword id="KW-0010">Activator</keyword>
<keyword id="KW-0539">Nucleus</keyword>
<keyword id="KW-1185">Reference proteome</keyword>
<keyword id="KW-0804">Transcription</keyword>
<keyword id="KW-0805">Transcription regulation</keyword>
<comment type="function">
    <text evidence="1">Component of the Mediator complex, a coactivator involved in the regulated transcription of nearly all RNA polymerase II-dependent genes. Mediator functions as a bridge to convey information from gene-specific regulatory proteins to the basal RNA polymerase II transcription machinery. Mediator is recruited to promoters by direct interactions with regulatory proteins and serves as a scaffold for the assembly of a functional preinitiation complex with RNA polymerase II and the general transcription factors (By similarity).</text>
</comment>
<comment type="subunit">
    <text evidence="1 3 4">Component of the Mediator complex, which is composed of MED1, MED4, MED6, MED7, MED8, MED9, MED10, MED11, MED12, MED13, MED13L, MED14, MED15, MED16, MED17, MED18, MED19, MED20, MED21, MED22, MED23, MED24, MED25, MED26, MED27, MED29, MED30, MED31, CCNC, CDK8 and CDC2L6/CDK11. The MED12, MED13, CCNC and CDK8 subunits form a distinct module termed the CDK8 module. Mediator containing the CDK8 module is less active than Mediator lacking this module in supporting transcriptional activation. Individual preparations of the Mediator complex lacking one or more distinct subunits have been variously termed ARC, CRSP, DRIP, PC2, SMCC and TRAP. Interacts with STAT2 (By similarity). Interacts with GATA1 and PPARG.</text>
</comment>
<comment type="interaction">
    <interactant intactId="EBI-5744951">
        <id>Q8VCD5</id>
    </interactant>
    <interactant intactId="EBI-644400">
        <id>Q04207</id>
        <label>Rela</label>
    </interactant>
    <organismsDiffer>false</organismsDiffer>
    <experiments>4</experiments>
</comment>
<comment type="subcellular location">
    <subcellularLocation>
        <location evidence="5">Nucleus</location>
    </subcellularLocation>
</comment>
<comment type="similarity">
    <text evidence="5">Belongs to the Mediator complex subunit 17 family.</text>
</comment>
<feature type="chain" id="PRO_0000304700" description="Mediator of RNA polymerase II transcription subunit 17">
    <location>
        <begin position="1"/>
        <end position="649"/>
    </location>
</feature>
<feature type="region of interest" description="Disordered" evidence="2">
    <location>
        <begin position="51"/>
        <end position="79"/>
    </location>
</feature>
<feature type="sequence conflict" description="In Ref. 1; BAC30005." evidence="5" ref="1">
    <original>S</original>
    <variation>G</variation>
    <location>
        <position position="550"/>
    </location>
</feature>